<sequence>MKKKILAFGLISALFCSTPAMADMNRTTKGALLGAGVGLLTGNGVNGVLKGAAVGAGVGAVTEKGRDGKNARKGAKVGAAVGAVTGVLTGNGLEGAIKGAVIGGTGGAILGKMK</sequence>
<feature type="chain" id="PRO_0000252224" description="UPF0757 protein YmgG">
    <location>
        <begin position="1"/>
        <end position="114"/>
    </location>
</feature>
<comment type="similarity">
    <text evidence="1">Belongs to the UPF0757 family.</text>
</comment>
<comment type="sequence caution" evidence="2">
    <conflict type="frameshift">
        <sequence resource="EMBL-CDS" id="ABB66490"/>
    </conflict>
</comment>
<organism>
    <name type="scientific">Shigella boydii serotype 4 (strain Sb227)</name>
    <dbReference type="NCBI Taxonomy" id="300268"/>
    <lineage>
        <taxon>Bacteria</taxon>
        <taxon>Pseudomonadati</taxon>
        <taxon>Pseudomonadota</taxon>
        <taxon>Gammaproteobacteria</taxon>
        <taxon>Enterobacterales</taxon>
        <taxon>Enterobacteriaceae</taxon>
        <taxon>Shigella</taxon>
    </lineage>
</organism>
<evidence type="ECO:0000255" key="1">
    <source>
        <dbReference type="HAMAP-Rule" id="MF_01455"/>
    </source>
</evidence>
<evidence type="ECO:0000305" key="2"/>
<dbReference type="EMBL" id="CP000036">
    <property type="protein sequence ID" value="ABB66490.1"/>
    <property type="status" value="ALT_FRAME"/>
    <property type="molecule type" value="Genomic_DNA"/>
</dbReference>
<dbReference type="KEGG" id="sbo:SBO_1897"/>
<dbReference type="HOGENOM" id="CLU_164687_0_0_6"/>
<dbReference type="Proteomes" id="UP000007067">
    <property type="component" value="Chromosome"/>
</dbReference>
<dbReference type="HAMAP" id="MF_01455">
    <property type="entry name" value="UPF0757"/>
    <property type="match status" value="1"/>
</dbReference>
<dbReference type="InterPro" id="IPR025693">
    <property type="entry name" value="Gly-zipper_OmpA-like_dom"/>
</dbReference>
<dbReference type="InterPro" id="IPR027367">
    <property type="entry name" value="Gly-zipper_YMGG"/>
</dbReference>
<dbReference type="InterPro" id="IPR022833">
    <property type="entry name" value="UPF0757_YmgG"/>
</dbReference>
<dbReference type="Pfam" id="PF13436">
    <property type="entry name" value="Gly-zipper_OmpA"/>
    <property type="match status" value="1"/>
</dbReference>
<dbReference type="Pfam" id="PF13441">
    <property type="entry name" value="Gly-zipper_YMGG"/>
    <property type="match status" value="1"/>
</dbReference>
<name>YMGG_SHIBS</name>
<accession>Q31ZL8</accession>
<gene>
    <name evidence="1" type="primary">ymgG</name>
    <name type="ordered locus">SBO_1897</name>
</gene>
<proteinExistence type="inferred from homology"/>
<reference key="1">
    <citation type="journal article" date="2005" name="Nucleic Acids Res.">
        <title>Genome dynamics and diversity of Shigella species, the etiologic agents of bacillary dysentery.</title>
        <authorList>
            <person name="Yang F."/>
            <person name="Yang J."/>
            <person name="Zhang X."/>
            <person name="Chen L."/>
            <person name="Jiang Y."/>
            <person name="Yan Y."/>
            <person name="Tang X."/>
            <person name="Wang J."/>
            <person name="Xiong Z."/>
            <person name="Dong J."/>
            <person name="Xue Y."/>
            <person name="Zhu Y."/>
            <person name="Xu X."/>
            <person name="Sun L."/>
            <person name="Chen S."/>
            <person name="Nie H."/>
            <person name="Peng J."/>
            <person name="Xu J."/>
            <person name="Wang Y."/>
            <person name="Yuan Z."/>
            <person name="Wen Y."/>
            <person name="Yao Z."/>
            <person name="Shen Y."/>
            <person name="Qiang B."/>
            <person name="Hou Y."/>
            <person name="Yu J."/>
            <person name="Jin Q."/>
        </authorList>
    </citation>
    <scope>NUCLEOTIDE SEQUENCE [LARGE SCALE GENOMIC DNA]</scope>
    <source>
        <strain>Sb227</strain>
    </source>
</reference>
<protein>
    <recommendedName>
        <fullName evidence="1">UPF0757 protein YmgG</fullName>
    </recommendedName>
</protein>